<accession>Q63H63</accession>
<dbReference type="EMBL" id="CP000001">
    <property type="protein sequence ID" value="AAU20098.1"/>
    <property type="molecule type" value="Genomic_DNA"/>
</dbReference>
<dbReference type="RefSeq" id="WP_000331490.1">
    <property type="nucleotide sequence ID" value="NZ_CP009968.1"/>
</dbReference>
<dbReference type="SMR" id="Q63H63"/>
<dbReference type="GeneID" id="93010915"/>
<dbReference type="KEGG" id="bcz:BCE33L0131"/>
<dbReference type="PATRIC" id="fig|288681.22.peg.19"/>
<dbReference type="Proteomes" id="UP000002612">
    <property type="component" value="Chromosome"/>
</dbReference>
<dbReference type="GO" id="GO:0022625">
    <property type="term" value="C:cytosolic large ribosomal subunit"/>
    <property type="evidence" value="ECO:0007669"/>
    <property type="project" value="TreeGrafter"/>
</dbReference>
<dbReference type="GO" id="GO:0003735">
    <property type="term" value="F:structural constituent of ribosome"/>
    <property type="evidence" value="ECO:0007669"/>
    <property type="project" value="InterPro"/>
</dbReference>
<dbReference type="GO" id="GO:0006412">
    <property type="term" value="P:translation"/>
    <property type="evidence" value="ECO:0007669"/>
    <property type="project" value="UniProtKB-UniRule"/>
</dbReference>
<dbReference type="FunFam" id="3.90.1030.10:FF:000002">
    <property type="entry name" value="50S ribosomal protein L17"/>
    <property type="match status" value="1"/>
</dbReference>
<dbReference type="Gene3D" id="3.90.1030.10">
    <property type="entry name" value="Ribosomal protein L17"/>
    <property type="match status" value="1"/>
</dbReference>
<dbReference type="HAMAP" id="MF_01368">
    <property type="entry name" value="Ribosomal_bL17"/>
    <property type="match status" value="1"/>
</dbReference>
<dbReference type="InterPro" id="IPR000456">
    <property type="entry name" value="Ribosomal_bL17"/>
</dbReference>
<dbReference type="InterPro" id="IPR047859">
    <property type="entry name" value="Ribosomal_bL17_CS"/>
</dbReference>
<dbReference type="InterPro" id="IPR036373">
    <property type="entry name" value="Ribosomal_bL17_sf"/>
</dbReference>
<dbReference type="NCBIfam" id="TIGR00059">
    <property type="entry name" value="L17"/>
    <property type="match status" value="1"/>
</dbReference>
<dbReference type="PANTHER" id="PTHR14413:SF16">
    <property type="entry name" value="LARGE RIBOSOMAL SUBUNIT PROTEIN BL17M"/>
    <property type="match status" value="1"/>
</dbReference>
<dbReference type="PANTHER" id="PTHR14413">
    <property type="entry name" value="RIBOSOMAL PROTEIN L17"/>
    <property type="match status" value="1"/>
</dbReference>
<dbReference type="Pfam" id="PF01196">
    <property type="entry name" value="Ribosomal_L17"/>
    <property type="match status" value="1"/>
</dbReference>
<dbReference type="SUPFAM" id="SSF64263">
    <property type="entry name" value="Prokaryotic ribosomal protein L17"/>
    <property type="match status" value="1"/>
</dbReference>
<dbReference type="PROSITE" id="PS01167">
    <property type="entry name" value="RIBOSOMAL_L17"/>
    <property type="match status" value="1"/>
</dbReference>
<feature type="chain" id="PRO_0000267824" description="Large ribosomal subunit protein bL17">
    <location>
        <begin position="1"/>
        <end position="120"/>
    </location>
</feature>
<protein>
    <recommendedName>
        <fullName evidence="1">Large ribosomal subunit protein bL17</fullName>
    </recommendedName>
    <alternativeName>
        <fullName evidence="2">50S ribosomal protein L17</fullName>
    </alternativeName>
</protein>
<comment type="subunit">
    <text evidence="1">Part of the 50S ribosomal subunit. Contacts protein L32.</text>
</comment>
<comment type="similarity">
    <text evidence="1">Belongs to the bacterial ribosomal protein bL17 family.</text>
</comment>
<proteinExistence type="inferred from homology"/>
<reference key="1">
    <citation type="journal article" date="2006" name="J. Bacteriol.">
        <title>Pathogenomic sequence analysis of Bacillus cereus and Bacillus thuringiensis isolates closely related to Bacillus anthracis.</title>
        <authorList>
            <person name="Han C.S."/>
            <person name="Xie G."/>
            <person name="Challacombe J.F."/>
            <person name="Altherr M.R."/>
            <person name="Bhotika S.S."/>
            <person name="Bruce D."/>
            <person name="Campbell C.S."/>
            <person name="Campbell M.L."/>
            <person name="Chen J."/>
            <person name="Chertkov O."/>
            <person name="Cleland C."/>
            <person name="Dimitrijevic M."/>
            <person name="Doggett N.A."/>
            <person name="Fawcett J.J."/>
            <person name="Glavina T."/>
            <person name="Goodwin L.A."/>
            <person name="Hill K.K."/>
            <person name="Hitchcock P."/>
            <person name="Jackson P.J."/>
            <person name="Keim P."/>
            <person name="Kewalramani A.R."/>
            <person name="Longmire J."/>
            <person name="Lucas S."/>
            <person name="Malfatti S."/>
            <person name="McMurry K."/>
            <person name="Meincke L.J."/>
            <person name="Misra M."/>
            <person name="Moseman B.L."/>
            <person name="Mundt M."/>
            <person name="Munk A.C."/>
            <person name="Okinaka R.T."/>
            <person name="Parson-Quintana B."/>
            <person name="Reilly L.P."/>
            <person name="Richardson P."/>
            <person name="Robinson D.L."/>
            <person name="Rubin E."/>
            <person name="Saunders E."/>
            <person name="Tapia R."/>
            <person name="Tesmer J.G."/>
            <person name="Thayer N."/>
            <person name="Thompson L.S."/>
            <person name="Tice H."/>
            <person name="Ticknor L.O."/>
            <person name="Wills P.L."/>
            <person name="Brettin T.S."/>
            <person name="Gilna P."/>
        </authorList>
    </citation>
    <scope>NUCLEOTIDE SEQUENCE [LARGE SCALE GENOMIC DNA]</scope>
    <source>
        <strain>ZK / E33L</strain>
    </source>
</reference>
<gene>
    <name evidence="1" type="primary">rplQ</name>
    <name type="ordered locus">BCE33L0131</name>
</gene>
<sequence>MAYRKLGRTSAQRKAMLRDLATDLIINERIQTTETRAKELRSVVEKMITLGKRGDLHARRQAAAFIRNEVANAETGQDALQKLFADVAPRYAERQGGYTRIAKIGPRRGDAAPMVIIELV</sequence>
<evidence type="ECO:0000255" key="1">
    <source>
        <dbReference type="HAMAP-Rule" id="MF_01368"/>
    </source>
</evidence>
<evidence type="ECO:0000305" key="2"/>
<organism>
    <name type="scientific">Bacillus cereus (strain ZK / E33L)</name>
    <dbReference type="NCBI Taxonomy" id="288681"/>
    <lineage>
        <taxon>Bacteria</taxon>
        <taxon>Bacillati</taxon>
        <taxon>Bacillota</taxon>
        <taxon>Bacilli</taxon>
        <taxon>Bacillales</taxon>
        <taxon>Bacillaceae</taxon>
        <taxon>Bacillus</taxon>
        <taxon>Bacillus cereus group</taxon>
    </lineage>
</organism>
<name>RL17_BACCZ</name>
<keyword id="KW-0687">Ribonucleoprotein</keyword>
<keyword id="KW-0689">Ribosomal protein</keyword>